<evidence type="ECO:0000305" key="1"/>
<sequence length="425" mass="45818">MKTKVAAIYGKRDVRLRVFELPEITDNELLVSVISDSVCLSTWKAALLGSEHKRVPDDLENHPVITGHECAGVIVEVGKNLTGKYKKGQRFVLQPAMGLPSGYSAGYSYEYFGGNATYMIIPEIAINLGCVLPYHGSYFAAASLAEPMCCIIGAYHANYHTTQYVYEHRMGVKPGGNIALLACAGPMGIGAIDYAINGGIQPSRVVVVDIDDKRLAQVQKLLPVELAASKGIELVYVNTKGMSDPVQMLRALTGDAGFDDIFVYAAVPAVVEMADELLAEDGCLNFFAGPTDKNFKVPFNFYNVHYNSTHVVGTSGGSTDDMKEAIALSATGQLQPSFMVTHIGGLDAVPETVLNLPDIPGGKKLIYNGVTMPLTAIADFAEKGKTDPLFKELARLVEETHGIWNEQAEKYLLAQFGVDIGEAAQ</sequence>
<gene>
    <name type="primary">yggP</name>
    <name type="ordered locus">b4465</name>
    <name type="ordered locus">JW5477</name>
</gene>
<organism>
    <name type="scientific">Escherichia coli (strain K12)</name>
    <dbReference type="NCBI Taxonomy" id="83333"/>
    <lineage>
        <taxon>Bacteria</taxon>
        <taxon>Pseudomonadati</taxon>
        <taxon>Pseudomonadota</taxon>
        <taxon>Gammaproteobacteria</taxon>
        <taxon>Enterobacterales</taxon>
        <taxon>Enterobacteriaceae</taxon>
        <taxon>Escherichia</taxon>
    </lineage>
</organism>
<keyword id="KW-0560">Oxidoreductase</keyword>
<keyword id="KW-1185">Reference proteome</keyword>
<comment type="similarity">
    <text evidence="1">To K.pneumoniae SorE.</text>
</comment>
<comment type="sequence caution" evidence="1">
    <conflict type="frameshift">
        <sequence resource="EMBL-CDS" id="AAA69098"/>
    </conflict>
</comment>
<comment type="sequence caution" evidence="1">
    <conflict type="frameshift">
        <sequence resource="EMBL-CDS" id="AAA69099"/>
    </conflict>
</comment>
<protein>
    <recommendedName>
        <fullName>Uncharacterized protein YggP</fullName>
    </recommendedName>
</protein>
<proteinExistence type="predicted"/>
<reference key="1">
    <citation type="journal article" date="1997" name="Science">
        <title>The complete genome sequence of Escherichia coli K-12.</title>
        <authorList>
            <person name="Blattner F.R."/>
            <person name="Plunkett G. III"/>
            <person name="Bloch C.A."/>
            <person name="Perna N.T."/>
            <person name="Burland V."/>
            <person name="Riley M."/>
            <person name="Collado-Vides J."/>
            <person name="Glasner J.D."/>
            <person name="Rode C.K."/>
            <person name="Mayhew G.F."/>
            <person name="Gregor J."/>
            <person name="Davis N.W."/>
            <person name="Kirkpatrick H.A."/>
            <person name="Goeden M.A."/>
            <person name="Rose D.J."/>
            <person name="Mau B."/>
            <person name="Shao Y."/>
        </authorList>
    </citation>
    <scope>NUCLEOTIDE SEQUENCE [LARGE SCALE GENOMIC DNA]</scope>
    <source>
        <strain>K12 / MG1655 / ATCC 47076</strain>
    </source>
</reference>
<reference key="2">
    <citation type="journal article" date="2006" name="Nucleic Acids Res.">
        <title>Escherichia coli K-12: a cooperatively developed annotation snapshot -- 2005.</title>
        <authorList>
            <person name="Riley M."/>
            <person name="Abe T."/>
            <person name="Arnaud M.B."/>
            <person name="Berlyn M.K.B."/>
            <person name="Blattner F.R."/>
            <person name="Chaudhuri R.R."/>
            <person name="Glasner J.D."/>
            <person name="Horiuchi T."/>
            <person name="Keseler I.M."/>
            <person name="Kosuge T."/>
            <person name="Mori H."/>
            <person name="Perna N.T."/>
            <person name="Plunkett G. III"/>
            <person name="Rudd K.E."/>
            <person name="Serres M.H."/>
            <person name="Thomas G.H."/>
            <person name="Thomson N.R."/>
            <person name="Wishart D."/>
            <person name="Wanner B.L."/>
        </authorList>
    </citation>
    <scope>SEQUENCE REVISION</scope>
</reference>
<reference key="3">
    <citation type="journal article" date="2006" name="Mol. Syst. Biol.">
        <title>Highly accurate genome sequences of Escherichia coli K-12 strains MG1655 and W3110.</title>
        <authorList>
            <person name="Hayashi K."/>
            <person name="Morooka N."/>
            <person name="Yamamoto Y."/>
            <person name="Fujita K."/>
            <person name="Isono K."/>
            <person name="Choi S."/>
            <person name="Ohtsubo E."/>
            <person name="Baba T."/>
            <person name="Wanner B.L."/>
            <person name="Mori H."/>
            <person name="Horiuchi T."/>
        </authorList>
    </citation>
    <scope>NUCLEOTIDE SEQUENCE [LARGE SCALE GENOMIC DNA]</scope>
    <source>
        <strain>K12 / W3110 / ATCC 27325 / DSM 5911</strain>
    </source>
</reference>
<name>YGGP_ECOLI</name>
<accession>P52048</accession>
<accession>P76644</accession>
<accession>P76645</accession>
<accession>Q2M9R1</accession>
<dbReference type="EMBL" id="U28377">
    <property type="protein sequence ID" value="AAA69099.1"/>
    <property type="status" value="ALT_FRAME"/>
    <property type="molecule type" value="Genomic_DNA"/>
</dbReference>
<dbReference type="EMBL" id="U28377">
    <property type="protein sequence ID" value="AAA69098.1"/>
    <property type="status" value="ALT_FRAME"/>
    <property type="molecule type" value="Genomic_DNA"/>
</dbReference>
<dbReference type="EMBL" id="U00096">
    <property type="protein sequence ID" value="AAT48154.1"/>
    <property type="molecule type" value="Genomic_DNA"/>
</dbReference>
<dbReference type="EMBL" id="AP009048">
    <property type="protein sequence ID" value="BAE76995.1"/>
    <property type="molecule type" value="Genomic_DNA"/>
</dbReference>
<dbReference type="RefSeq" id="WP_000853247.1">
    <property type="nucleotide sequence ID" value="NZ_SSZK01000003.1"/>
</dbReference>
<dbReference type="RefSeq" id="YP_026187.1">
    <property type="nucleotide sequence ID" value="NC_000913.3"/>
</dbReference>
<dbReference type="SMR" id="P52048"/>
<dbReference type="BioGRID" id="4262348">
    <property type="interactions" value="9"/>
</dbReference>
<dbReference type="FunCoup" id="P52048">
    <property type="interactions" value="148"/>
</dbReference>
<dbReference type="STRING" id="511145.b4465"/>
<dbReference type="PaxDb" id="511145-b4465"/>
<dbReference type="DNASU" id="2847686"/>
<dbReference type="EnsemblBacteria" id="AAT48154">
    <property type="protein sequence ID" value="AAT48154"/>
    <property type="gene ID" value="b4465"/>
</dbReference>
<dbReference type="GeneID" id="2847686"/>
<dbReference type="KEGG" id="ecj:JW5477"/>
<dbReference type="KEGG" id="eco:b4465"/>
<dbReference type="KEGG" id="ecoc:C3026_16055"/>
<dbReference type="PATRIC" id="fig|1411691.4.peg.3801"/>
<dbReference type="EchoBASE" id="EB2802"/>
<dbReference type="eggNOG" id="COG1063">
    <property type="taxonomic scope" value="Bacteria"/>
</dbReference>
<dbReference type="HOGENOM" id="CLU_054732_0_0_6"/>
<dbReference type="InParanoid" id="P52048"/>
<dbReference type="OMA" id="LNFYNVH"/>
<dbReference type="OrthoDB" id="9797931at2"/>
<dbReference type="PhylomeDB" id="P52048"/>
<dbReference type="BioCyc" id="EcoCyc:G7520-MONOMER"/>
<dbReference type="PRO" id="PR:P52048"/>
<dbReference type="Proteomes" id="UP000000625">
    <property type="component" value="Chromosome"/>
</dbReference>
<dbReference type="GO" id="GO:0016491">
    <property type="term" value="F:oxidoreductase activity"/>
    <property type="evidence" value="ECO:0007669"/>
    <property type="project" value="UniProtKB-KW"/>
</dbReference>
<dbReference type="CDD" id="cd08238">
    <property type="entry name" value="sorbose_phosphate_red"/>
    <property type="match status" value="1"/>
</dbReference>
<dbReference type="Gene3D" id="3.90.180.10">
    <property type="entry name" value="Medium-chain alcohol dehydrogenases, catalytic domain"/>
    <property type="match status" value="1"/>
</dbReference>
<dbReference type="Gene3D" id="3.40.50.720">
    <property type="entry name" value="NAD(P)-binding Rossmann-like Domain"/>
    <property type="match status" value="1"/>
</dbReference>
<dbReference type="InterPro" id="IPR013149">
    <property type="entry name" value="ADH-like_C"/>
</dbReference>
<dbReference type="InterPro" id="IPR013154">
    <property type="entry name" value="ADH-like_N"/>
</dbReference>
<dbReference type="InterPro" id="IPR011032">
    <property type="entry name" value="GroES-like_sf"/>
</dbReference>
<dbReference type="InterPro" id="IPR036291">
    <property type="entry name" value="NAD(P)-bd_dom_sf"/>
</dbReference>
<dbReference type="InterPro" id="IPR050129">
    <property type="entry name" value="Zn_alcohol_dh"/>
</dbReference>
<dbReference type="PANTHER" id="PTHR43401">
    <property type="entry name" value="L-THREONINE 3-DEHYDROGENASE"/>
    <property type="match status" value="1"/>
</dbReference>
<dbReference type="PANTHER" id="PTHR43401:SF2">
    <property type="entry name" value="L-THREONINE 3-DEHYDROGENASE"/>
    <property type="match status" value="1"/>
</dbReference>
<dbReference type="Pfam" id="PF08240">
    <property type="entry name" value="ADH_N"/>
    <property type="match status" value="1"/>
</dbReference>
<dbReference type="Pfam" id="PF00107">
    <property type="entry name" value="ADH_zinc_N"/>
    <property type="match status" value="1"/>
</dbReference>
<dbReference type="SUPFAM" id="SSF50129">
    <property type="entry name" value="GroES-like"/>
    <property type="match status" value="1"/>
</dbReference>
<dbReference type="SUPFAM" id="SSF51735">
    <property type="entry name" value="NAD(P)-binding Rossmann-fold domains"/>
    <property type="match status" value="1"/>
</dbReference>
<feature type="chain" id="PRO_0000169374" description="Uncharacterized protein YggP">
    <location>
        <begin position="1"/>
        <end position="425"/>
    </location>
</feature>